<sequence>MCQSNQIVSHFLSHRNVTNELAEKISKDHYSYKPAETSMSAEELVKHILTSFHLFANVIKEGNASPFQNKQEETETDLNVLAKTYTEKTVAILEQLTEEQLDREIDLTSAFGRKVTGRALLQLAMEHEIHHKGNLFVYVREMGHTELPFYQQRM</sequence>
<protein>
    <recommendedName>
        <fullName>Uncharacterized protein YjoA</fullName>
    </recommendedName>
</protein>
<organism>
    <name type="scientific">Bacillus subtilis (strain 168)</name>
    <dbReference type="NCBI Taxonomy" id="224308"/>
    <lineage>
        <taxon>Bacteria</taxon>
        <taxon>Bacillati</taxon>
        <taxon>Bacillota</taxon>
        <taxon>Bacilli</taxon>
        <taxon>Bacillales</taxon>
        <taxon>Bacillaceae</taxon>
        <taxon>Bacillus</taxon>
    </lineage>
</organism>
<keyword id="KW-0002">3D-structure</keyword>
<keyword id="KW-0479">Metal-binding</keyword>
<keyword id="KW-0597">Phosphoprotein</keyword>
<keyword id="KW-1185">Reference proteome</keyword>
<name>YJOA_BACSU</name>
<gene>
    <name type="primary">yjoA</name>
    <name type="ordered locus">BSU12410</name>
</gene>
<proteinExistence type="evidence at protein level"/>
<dbReference type="EMBL" id="AF015825">
    <property type="protein sequence ID" value="AAC46337.1"/>
    <property type="molecule type" value="Genomic_DNA"/>
</dbReference>
<dbReference type="EMBL" id="AL009126">
    <property type="protein sequence ID" value="CAB13098.1"/>
    <property type="molecule type" value="Genomic_DNA"/>
</dbReference>
<dbReference type="PIR" id="F69853">
    <property type="entry name" value="F69853"/>
</dbReference>
<dbReference type="RefSeq" id="NP_389123.1">
    <property type="nucleotide sequence ID" value="NC_000964.3"/>
</dbReference>
<dbReference type="RefSeq" id="WP_003245144.1">
    <property type="nucleotide sequence ID" value="NZ_OZ025638.1"/>
</dbReference>
<dbReference type="PDB" id="3DKA">
    <property type="method" value="X-ray"/>
    <property type="resolution" value="2.30 A"/>
    <property type="chains" value="A/B=1-154"/>
</dbReference>
<dbReference type="PDBsum" id="3DKA"/>
<dbReference type="SMR" id="O34334"/>
<dbReference type="FunCoup" id="O34334">
    <property type="interactions" value="12"/>
</dbReference>
<dbReference type="STRING" id="224308.BSU12410"/>
<dbReference type="iPTMnet" id="O34334"/>
<dbReference type="jPOST" id="O34334"/>
<dbReference type="PaxDb" id="224308-BSU12410"/>
<dbReference type="EnsemblBacteria" id="CAB13098">
    <property type="protein sequence ID" value="CAB13098"/>
    <property type="gene ID" value="BSU_12410"/>
</dbReference>
<dbReference type="GeneID" id="939416"/>
<dbReference type="KEGG" id="bsu:BSU12410"/>
<dbReference type="PATRIC" id="fig|224308.179.peg.1342"/>
<dbReference type="eggNOG" id="COG2318">
    <property type="taxonomic scope" value="Bacteria"/>
</dbReference>
<dbReference type="InParanoid" id="O34334"/>
<dbReference type="OrthoDB" id="119432at2"/>
<dbReference type="BioCyc" id="BSUB:BSU12410-MONOMER"/>
<dbReference type="EvolutionaryTrace" id="O34334"/>
<dbReference type="Proteomes" id="UP000001570">
    <property type="component" value="Chromosome"/>
</dbReference>
<dbReference type="GO" id="GO:0046872">
    <property type="term" value="F:metal ion binding"/>
    <property type="evidence" value="ECO:0007669"/>
    <property type="project" value="UniProtKB-KW"/>
</dbReference>
<dbReference type="Gene3D" id="1.20.120.450">
    <property type="entry name" value="dinb family like domain"/>
    <property type="match status" value="1"/>
</dbReference>
<dbReference type="InterPro" id="IPR007837">
    <property type="entry name" value="DinB"/>
</dbReference>
<dbReference type="InterPro" id="IPR034660">
    <property type="entry name" value="DinB/YfiT-like"/>
</dbReference>
<dbReference type="Pfam" id="PF05163">
    <property type="entry name" value="DinB"/>
    <property type="match status" value="1"/>
</dbReference>
<dbReference type="SUPFAM" id="SSF109854">
    <property type="entry name" value="DinB/YfiT-like putative metalloenzymes"/>
    <property type="match status" value="1"/>
</dbReference>
<reference key="1">
    <citation type="journal article" date="1998" name="Microbiology">
        <title>A 35.7 kb DNA fragment from the Bacillus subtilis chromosome containing a putative 12.3 kb operon involved in hexuronate catabolism and a perfectly symmetrical hypothetical catabolite-responsive element.</title>
        <authorList>
            <person name="Rivolta C."/>
            <person name="Soldo B."/>
            <person name="Lazarevic V."/>
            <person name="Joris B."/>
            <person name="Mauel C."/>
            <person name="Karamata D."/>
        </authorList>
    </citation>
    <scope>NUCLEOTIDE SEQUENCE [GENOMIC DNA]</scope>
    <source>
        <strain>168</strain>
    </source>
</reference>
<reference key="2">
    <citation type="journal article" date="1997" name="Nature">
        <title>The complete genome sequence of the Gram-positive bacterium Bacillus subtilis.</title>
        <authorList>
            <person name="Kunst F."/>
            <person name="Ogasawara N."/>
            <person name="Moszer I."/>
            <person name="Albertini A.M."/>
            <person name="Alloni G."/>
            <person name="Azevedo V."/>
            <person name="Bertero M.G."/>
            <person name="Bessieres P."/>
            <person name="Bolotin A."/>
            <person name="Borchert S."/>
            <person name="Borriss R."/>
            <person name="Boursier L."/>
            <person name="Brans A."/>
            <person name="Braun M."/>
            <person name="Brignell S.C."/>
            <person name="Bron S."/>
            <person name="Brouillet S."/>
            <person name="Bruschi C.V."/>
            <person name="Caldwell B."/>
            <person name="Capuano V."/>
            <person name="Carter N.M."/>
            <person name="Choi S.-K."/>
            <person name="Codani J.-J."/>
            <person name="Connerton I.F."/>
            <person name="Cummings N.J."/>
            <person name="Daniel R.A."/>
            <person name="Denizot F."/>
            <person name="Devine K.M."/>
            <person name="Duesterhoeft A."/>
            <person name="Ehrlich S.D."/>
            <person name="Emmerson P.T."/>
            <person name="Entian K.-D."/>
            <person name="Errington J."/>
            <person name="Fabret C."/>
            <person name="Ferrari E."/>
            <person name="Foulger D."/>
            <person name="Fritz C."/>
            <person name="Fujita M."/>
            <person name="Fujita Y."/>
            <person name="Fuma S."/>
            <person name="Galizzi A."/>
            <person name="Galleron N."/>
            <person name="Ghim S.-Y."/>
            <person name="Glaser P."/>
            <person name="Goffeau A."/>
            <person name="Golightly E.J."/>
            <person name="Grandi G."/>
            <person name="Guiseppi G."/>
            <person name="Guy B.J."/>
            <person name="Haga K."/>
            <person name="Haiech J."/>
            <person name="Harwood C.R."/>
            <person name="Henaut A."/>
            <person name="Hilbert H."/>
            <person name="Holsappel S."/>
            <person name="Hosono S."/>
            <person name="Hullo M.-F."/>
            <person name="Itaya M."/>
            <person name="Jones L.-M."/>
            <person name="Joris B."/>
            <person name="Karamata D."/>
            <person name="Kasahara Y."/>
            <person name="Klaerr-Blanchard M."/>
            <person name="Klein C."/>
            <person name="Kobayashi Y."/>
            <person name="Koetter P."/>
            <person name="Koningstein G."/>
            <person name="Krogh S."/>
            <person name="Kumano M."/>
            <person name="Kurita K."/>
            <person name="Lapidus A."/>
            <person name="Lardinois S."/>
            <person name="Lauber J."/>
            <person name="Lazarevic V."/>
            <person name="Lee S.-M."/>
            <person name="Levine A."/>
            <person name="Liu H."/>
            <person name="Masuda S."/>
            <person name="Mauel C."/>
            <person name="Medigue C."/>
            <person name="Medina N."/>
            <person name="Mellado R.P."/>
            <person name="Mizuno M."/>
            <person name="Moestl D."/>
            <person name="Nakai S."/>
            <person name="Noback M."/>
            <person name="Noone D."/>
            <person name="O'Reilly M."/>
            <person name="Ogawa K."/>
            <person name="Ogiwara A."/>
            <person name="Oudega B."/>
            <person name="Park S.-H."/>
            <person name="Parro V."/>
            <person name="Pohl T.M."/>
            <person name="Portetelle D."/>
            <person name="Porwollik S."/>
            <person name="Prescott A.M."/>
            <person name="Presecan E."/>
            <person name="Pujic P."/>
            <person name="Purnelle B."/>
            <person name="Rapoport G."/>
            <person name="Rey M."/>
            <person name="Reynolds S."/>
            <person name="Rieger M."/>
            <person name="Rivolta C."/>
            <person name="Rocha E."/>
            <person name="Roche B."/>
            <person name="Rose M."/>
            <person name="Sadaie Y."/>
            <person name="Sato T."/>
            <person name="Scanlan E."/>
            <person name="Schleich S."/>
            <person name="Schroeter R."/>
            <person name="Scoffone F."/>
            <person name="Sekiguchi J."/>
            <person name="Sekowska A."/>
            <person name="Seror S.J."/>
            <person name="Serror P."/>
            <person name="Shin B.-S."/>
            <person name="Soldo B."/>
            <person name="Sorokin A."/>
            <person name="Tacconi E."/>
            <person name="Takagi T."/>
            <person name="Takahashi H."/>
            <person name="Takemaru K."/>
            <person name="Takeuchi M."/>
            <person name="Tamakoshi A."/>
            <person name="Tanaka T."/>
            <person name="Terpstra P."/>
            <person name="Tognoni A."/>
            <person name="Tosato V."/>
            <person name="Uchiyama S."/>
            <person name="Vandenbol M."/>
            <person name="Vannier F."/>
            <person name="Vassarotti A."/>
            <person name="Viari A."/>
            <person name="Wambutt R."/>
            <person name="Wedler E."/>
            <person name="Wedler H."/>
            <person name="Weitzenegger T."/>
            <person name="Winters P."/>
            <person name="Wipat A."/>
            <person name="Yamamoto H."/>
            <person name="Yamane K."/>
            <person name="Yasumoto K."/>
            <person name="Yata K."/>
            <person name="Yoshida K."/>
            <person name="Yoshikawa H.-F."/>
            <person name="Zumstein E."/>
            <person name="Yoshikawa H."/>
            <person name="Danchin A."/>
        </authorList>
    </citation>
    <scope>NUCLEOTIDE SEQUENCE [LARGE SCALE GENOMIC DNA]</scope>
    <source>
        <strain>168</strain>
    </source>
</reference>
<reference key="3">
    <citation type="journal article" date="2007" name="Mol. Cell. Proteomics">
        <title>The serine/threonine/tyrosine phosphoproteome of the model bacterium Bacillus subtilis.</title>
        <authorList>
            <person name="Macek B."/>
            <person name="Mijakovic I."/>
            <person name="Olsen J.V."/>
            <person name="Gnad F."/>
            <person name="Kumar C."/>
            <person name="Jensen P.R."/>
            <person name="Mann M."/>
        </authorList>
    </citation>
    <scope>PHOSPHORYLATION [LARGE SCALE ANALYSIS] AT TYR-150</scope>
    <scope>IDENTIFICATION BY MASS SPECTROMETRY</scope>
    <source>
        <strain>168</strain>
    </source>
</reference>
<reference key="4">
    <citation type="submission" date="2008-08" db="PDB data bank">
        <title>Crystal structure of a dinB-like protein (NP_389123.1) FROM Bacillus subtilis at 2.30 A resolution.</title>
        <authorList>
            <consortium name="Joint center for structural genomics (JCSG)"/>
        </authorList>
    </citation>
    <scope>X-RAY CRYSTALLOGRAPHY (2.3 ANGSTROMS)</scope>
</reference>
<feature type="chain" id="PRO_0000049600" description="Uncharacterized protein YjoA">
    <location>
        <begin position="1"/>
        <end position="154"/>
    </location>
</feature>
<feature type="binding site" evidence="1">
    <location>
        <position position="47"/>
    </location>
    <ligand>
        <name>a divalent metal cation</name>
        <dbReference type="ChEBI" id="CHEBI:60240"/>
    </ligand>
</feature>
<feature type="binding site" evidence="1">
    <location>
        <position position="127"/>
    </location>
    <ligand>
        <name>a divalent metal cation</name>
        <dbReference type="ChEBI" id="CHEBI:60240"/>
    </ligand>
</feature>
<feature type="binding site" evidence="1">
    <location>
        <position position="131"/>
    </location>
    <ligand>
        <name>a divalent metal cation</name>
        <dbReference type="ChEBI" id="CHEBI:60240"/>
    </ligand>
</feature>
<feature type="modified residue" description="Phosphotyrosine" evidence="2">
    <location>
        <position position="150"/>
    </location>
</feature>
<feature type="helix" evidence="4">
    <location>
        <begin position="6"/>
        <end position="22"/>
    </location>
</feature>
<feature type="helix" evidence="4">
    <location>
        <begin position="41"/>
        <end position="61"/>
    </location>
</feature>
<feature type="strand" evidence="4">
    <location>
        <begin position="62"/>
        <end position="64"/>
    </location>
</feature>
<feature type="helix" evidence="4">
    <location>
        <begin position="65"/>
        <end position="67"/>
    </location>
</feature>
<feature type="helix" evidence="4">
    <location>
        <begin position="78"/>
        <end position="94"/>
    </location>
</feature>
<feature type="helix" evidence="4">
    <location>
        <begin position="98"/>
        <end position="102"/>
    </location>
</feature>
<feature type="strand" evidence="4">
    <location>
        <begin position="103"/>
        <end position="105"/>
    </location>
</feature>
<feature type="helix" evidence="4">
    <location>
        <begin position="117"/>
        <end position="141"/>
    </location>
</feature>
<accession>O34334</accession>
<evidence type="ECO:0000250" key="1"/>
<evidence type="ECO:0000269" key="2">
    <source>
    </source>
</evidence>
<evidence type="ECO:0000305" key="3"/>
<evidence type="ECO:0007829" key="4">
    <source>
        <dbReference type="PDB" id="3DKA"/>
    </source>
</evidence>
<comment type="subunit">
    <text evidence="3">Homodimer.</text>
</comment>
<comment type="similarity">
    <text evidence="3">Belongs to the DinB family.</text>
</comment>